<proteinExistence type="inferred from homology"/>
<accession>A5IV11</accession>
<protein>
    <recommendedName>
        <fullName evidence="1">Large ribosomal subunit protein bL36</fullName>
    </recommendedName>
    <alternativeName>
        <fullName evidence="2">50S ribosomal protein L36</fullName>
    </alternativeName>
</protein>
<name>RL36_STAA9</name>
<keyword id="KW-0687">Ribonucleoprotein</keyword>
<keyword id="KW-0689">Ribosomal protein</keyword>
<sequence length="37" mass="4305">MKVRPSVKPICEKCKVIKRKGKVMVICENPKHKQRQG</sequence>
<organism>
    <name type="scientific">Staphylococcus aureus (strain JH9)</name>
    <dbReference type="NCBI Taxonomy" id="359786"/>
    <lineage>
        <taxon>Bacteria</taxon>
        <taxon>Bacillati</taxon>
        <taxon>Bacillota</taxon>
        <taxon>Bacilli</taxon>
        <taxon>Bacillales</taxon>
        <taxon>Staphylococcaceae</taxon>
        <taxon>Staphylococcus</taxon>
    </lineage>
</organism>
<evidence type="ECO:0000255" key="1">
    <source>
        <dbReference type="HAMAP-Rule" id="MF_00251"/>
    </source>
</evidence>
<evidence type="ECO:0000305" key="2"/>
<gene>
    <name evidence="1" type="primary">rpmJ</name>
    <name type="ordered locus">SaurJH9_2254</name>
</gene>
<dbReference type="EMBL" id="CP000703">
    <property type="protein sequence ID" value="ABQ50034.1"/>
    <property type="molecule type" value="Genomic_DNA"/>
</dbReference>
<dbReference type="RefSeq" id="WP_000868342.1">
    <property type="nucleotide sequence ID" value="NC_009487.1"/>
</dbReference>
<dbReference type="SMR" id="A5IV11"/>
<dbReference type="GeneID" id="98346539"/>
<dbReference type="KEGG" id="saj:SaurJH9_2254"/>
<dbReference type="HOGENOM" id="CLU_135723_6_2_9"/>
<dbReference type="GO" id="GO:0005737">
    <property type="term" value="C:cytoplasm"/>
    <property type="evidence" value="ECO:0007669"/>
    <property type="project" value="UniProtKB-ARBA"/>
</dbReference>
<dbReference type="GO" id="GO:1990904">
    <property type="term" value="C:ribonucleoprotein complex"/>
    <property type="evidence" value="ECO:0007669"/>
    <property type="project" value="UniProtKB-KW"/>
</dbReference>
<dbReference type="GO" id="GO:0005840">
    <property type="term" value="C:ribosome"/>
    <property type="evidence" value="ECO:0007669"/>
    <property type="project" value="UniProtKB-KW"/>
</dbReference>
<dbReference type="GO" id="GO:0003735">
    <property type="term" value="F:structural constituent of ribosome"/>
    <property type="evidence" value="ECO:0007669"/>
    <property type="project" value="InterPro"/>
</dbReference>
<dbReference type="GO" id="GO:0006412">
    <property type="term" value="P:translation"/>
    <property type="evidence" value="ECO:0007669"/>
    <property type="project" value="UniProtKB-UniRule"/>
</dbReference>
<dbReference type="HAMAP" id="MF_00251">
    <property type="entry name" value="Ribosomal_bL36"/>
    <property type="match status" value="1"/>
</dbReference>
<dbReference type="InterPro" id="IPR000473">
    <property type="entry name" value="Ribosomal_bL36"/>
</dbReference>
<dbReference type="InterPro" id="IPR035977">
    <property type="entry name" value="Ribosomal_bL36_sp"/>
</dbReference>
<dbReference type="NCBIfam" id="TIGR01022">
    <property type="entry name" value="rpmJ_bact"/>
    <property type="match status" value="1"/>
</dbReference>
<dbReference type="PANTHER" id="PTHR42888">
    <property type="entry name" value="50S RIBOSOMAL PROTEIN L36, CHLOROPLASTIC"/>
    <property type="match status" value="1"/>
</dbReference>
<dbReference type="PANTHER" id="PTHR42888:SF1">
    <property type="entry name" value="LARGE RIBOSOMAL SUBUNIT PROTEIN BL36C"/>
    <property type="match status" value="1"/>
</dbReference>
<dbReference type="Pfam" id="PF00444">
    <property type="entry name" value="Ribosomal_L36"/>
    <property type="match status" value="1"/>
</dbReference>
<dbReference type="SUPFAM" id="SSF57840">
    <property type="entry name" value="Ribosomal protein L36"/>
    <property type="match status" value="1"/>
</dbReference>
<dbReference type="PROSITE" id="PS00828">
    <property type="entry name" value="RIBOSOMAL_L36"/>
    <property type="match status" value="1"/>
</dbReference>
<reference key="1">
    <citation type="submission" date="2007-05" db="EMBL/GenBank/DDBJ databases">
        <title>Complete sequence of chromosome of Staphylococcus aureus subsp. aureus JH9.</title>
        <authorList>
            <consortium name="US DOE Joint Genome Institute"/>
            <person name="Copeland A."/>
            <person name="Lucas S."/>
            <person name="Lapidus A."/>
            <person name="Barry K."/>
            <person name="Detter J.C."/>
            <person name="Glavina del Rio T."/>
            <person name="Hammon N."/>
            <person name="Israni S."/>
            <person name="Pitluck S."/>
            <person name="Chain P."/>
            <person name="Malfatti S."/>
            <person name="Shin M."/>
            <person name="Vergez L."/>
            <person name="Schmutz J."/>
            <person name="Larimer F."/>
            <person name="Land M."/>
            <person name="Hauser L."/>
            <person name="Kyrpides N."/>
            <person name="Kim E."/>
            <person name="Tomasz A."/>
            <person name="Richardson P."/>
        </authorList>
    </citation>
    <scope>NUCLEOTIDE SEQUENCE [LARGE SCALE GENOMIC DNA]</scope>
    <source>
        <strain>JH9</strain>
    </source>
</reference>
<feature type="chain" id="PRO_1000078488" description="Large ribosomal subunit protein bL36">
    <location>
        <begin position="1"/>
        <end position="37"/>
    </location>
</feature>
<comment type="similarity">
    <text evidence="1">Belongs to the bacterial ribosomal protein bL36 family.</text>
</comment>